<gene>
    <name evidence="5" type="primary">htyC</name>
</gene>
<name>HTYC_ASPRU</name>
<dbReference type="EC" id="1.1.1.85" evidence="7"/>
<dbReference type="EMBL" id="JX421685">
    <property type="protein sequence ID" value="AFT91394.1"/>
    <property type="molecule type" value="Genomic_DNA"/>
</dbReference>
<dbReference type="SMR" id="K0E689"/>
<dbReference type="BioCyc" id="MetaCyc:MONOMER-19236"/>
<dbReference type="GO" id="GO:0005829">
    <property type="term" value="C:cytosol"/>
    <property type="evidence" value="ECO:0007669"/>
    <property type="project" value="TreeGrafter"/>
</dbReference>
<dbReference type="GO" id="GO:0003862">
    <property type="term" value="F:3-isopropylmalate dehydrogenase activity"/>
    <property type="evidence" value="ECO:0007669"/>
    <property type="project" value="UniProtKB-EC"/>
</dbReference>
<dbReference type="GO" id="GO:0000287">
    <property type="term" value="F:magnesium ion binding"/>
    <property type="evidence" value="ECO:0007669"/>
    <property type="project" value="InterPro"/>
</dbReference>
<dbReference type="GO" id="GO:0051287">
    <property type="term" value="F:NAD binding"/>
    <property type="evidence" value="ECO:0007669"/>
    <property type="project" value="InterPro"/>
</dbReference>
<dbReference type="GO" id="GO:0009098">
    <property type="term" value="P:L-leucine biosynthetic process"/>
    <property type="evidence" value="ECO:0007669"/>
    <property type="project" value="UniProtKB-KW"/>
</dbReference>
<dbReference type="FunFam" id="3.40.718.10:FF:000006">
    <property type="entry name" value="3-isopropylmalate dehydrogenase"/>
    <property type="match status" value="1"/>
</dbReference>
<dbReference type="Gene3D" id="3.40.718.10">
    <property type="entry name" value="Isopropylmalate Dehydrogenase"/>
    <property type="match status" value="1"/>
</dbReference>
<dbReference type="InterPro" id="IPR019818">
    <property type="entry name" value="IsoCit/isopropylmalate_DH_CS"/>
</dbReference>
<dbReference type="InterPro" id="IPR024084">
    <property type="entry name" value="IsoPropMal-DH-like_dom"/>
</dbReference>
<dbReference type="InterPro" id="IPR004429">
    <property type="entry name" value="Isopropylmalate_DH"/>
</dbReference>
<dbReference type="NCBIfam" id="TIGR00169">
    <property type="entry name" value="leuB"/>
    <property type="match status" value="1"/>
</dbReference>
<dbReference type="PANTHER" id="PTHR42979">
    <property type="entry name" value="3-ISOPROPYLMALATE DEHYDROGENASE"/>
    <property type="match status" value="1"/>
</dbReference>
<dbReference type="PANTHER" id="PTHR42979:SF4">
    <property type="entry name" value="3-ISOPROPYLMALATE DEHYDROGENASE"/>
    <property type="match status" value="1"/>
</dbReference>
<dbReference type="Pfam" id="PF00180">
    <property type="entry name" value="Iso_dh"/>
    <property type="match status" value="1"/>
</dbReference>
<dbReference type="SMART" id="SM01329">
    <property type="entry name" value="Iso_dh"/>
    <property type="match status" value="1"/>
</dbReference>
<dbReference type="SUPFAM" id="SSF53659">
    <property type="entry name" value="Isocitrate/Isopropylmalate dehydrogenase-like"/>
    <property type="match status" value="1"/>
</dbReference>
<dbReference type="PROSITE" id="PS00470">
    <property type="entry name" value="IDH_IMDH"/>
    <property type="match status" value="1"/>
</dbReference>
<keyword id="KW-0028">Amino-acid biosynthesis</keyword>
<keyword id="KW-0100">Branched-chain amino acid biosynthesis</keyword>
<keyword id="KW-0432">Leucine biosynthesis</keyword>
<keyword id="KW-0460">Magnesium</keyword>
<keyword id="KW-0464">Manganese</keyword>
<keyword id="KW-0479">Metal-binding</keyword>
<keyword id="KW-0520">NAD</keyword>
<keyword id="KW-0521">NADP</keyword>
<keyword id="KW-0560">Oxidoreductase</keyword>
<protein>
    <recommendedName>
        <fullName evidence="5">Isopropyl malate dehydrogenase htyC</fullName>
        <ecNumber evidence="7">1.1.1.85</ecNumber>
    </recommendedName>
    <alternativeName>
        <fullName evidence="5">L-homotyrosine biosynthetic cluster protein C</fullName>
    </alternativeName>
</protein>
<comment type="function">
    <text evidence="4">Isopropyl malate dehydrogenase; part of the gene cluster that mediates the de novo generation of L-homotyrosine from acetyl-CoA and 4-hydroxyphenyl-pyruvate (PubMed:22998630). L-homotyrosine is a building block of echinocandin B, a fungal lipidated cyclic hexapeptide that acts as an antifungal agent (PubMed:22998630). L-homotyrosine 4-hydroxyphenyl-pyruvate first undergoes an aldol-type condensation by htyA with the C-2 of acetyl-CoA followed by the release of CoA to form 2-(4-hydroxybenzyl)-malate (PubMed:22998630). This is followed by isomerization of 2-(4-hydroxy-benzyl)-malate to 3-(4-hydroxybenzyl)-malate by htyD (PubMed:22998630). Thereafter, 3-(4-hydroxybenzyl)-malate undergoes decarboxylation and oxidation to form 2-oxo-4-(4-hydroxybenzyl)butanoic acid, coupled to reduction of NAD(+) to NADH by htyC (PubMed:22998630). The product then undergoes transamination catalyzed by htyB to form L-homotyrosine (PubMed:22998630).</text>
</comment>
<comment type="catalytic activity">
    <reaction evidence="3">
        <text>(2R,3S)-3-isopropylmalate + NAD(+) = 4-methyl-2-oxopentanoate + CO2 + NADH</text>
        <dbReference type="Rhea" id="RHEA:32271"/>
        <dbReference type="ChEBI" id="CHEBI:16526"/>
        <dbReference type="ChEBI" id="CHEBI:17865"/>
        <dbReference type="ChEBI" id="CHEBI:35121"/>
        <dbReference type="ChEBI" id="CHEBI:57540"/>
        <dbReference type="ChEBI" id="CHEBI:57945"/>
        <dbReference type="EC" id="1.1.1.85"/>
    </reaction>
</comment>
<comment type="cofactor">
    <cofactor evidence="3">
        <name>Mg(2+)</name>
        <dbReference type="ChEBI" id="CHEBI:18420"/>
    </cofactor>
    <cofactor evidence="3">
        <name>Mn(2+)</name>
        <dbReference type="ChEBI" id="CHEBI:29035"/>
    </cofactor>
    <text evidence="3">Binds 1 Mg(2+) or Mn(2+) ion per subunit.</text>
</comment>
<comment type="pathway">
    <text evidence="7">Antifungal biosynthesis.</text>
</comment>
<comment type="subunit">
    <text evidence="3">Homodimer.</text>
</comment>
<comment type="biotechnology">
    <text evidence="4">Due to their effectiveness as antifungal agents, echinocandin derivatives can be used for the treatment of human invasive candidiasis (PubMed:22998630).</text>
</comment>
<comment type="similarity">
    <text evidence="6">Belongs to the isocitrate and isopropylmalate dehydrogenases family.</text>
</comment>
<proteinExistence type="evidence at protein level"/>
<reference key="1">
    <citation type="journal article" date="2012" name="J. Am. Chem. Soc.">
        <title>Identification and characterization of the echinocandin B biosynthetic gene cluster from Emericella rugulosa NRRL 11440.</title>
        <authorList>
            <person name="Cacho R.A."/>
            <person name="Jiang W."/>
            <person name="Chooi Y.H."/>
            <person name="Walsh C.T."/>
            <person name="Tang Y."/>
        </authorList>
    </citation>
    <scope>NUCLEOTIDE SEQUENCE [GENOMIC DNA]</scope>
    <scope>FUNCTION</scope>
    <scope>PATHWAY</scope>
    <scope>BIOTECHNOLOGY</scope>
    <source>
        <strain>ATCC 58397 / NRRL 11440</strain>
    </source>
</reference>
<feature type="chain" id="PRO_0000443853" description="Isopropyl malate dehydrogenase htyC">
    <location>
        <begin position="1"/>
        <end position="366"/>
    </location>
</feature>
<feature type="binding site" evidence="1">
    <location>
        <begin position="71"/>
        <end position="73"/>
    </location>
    <ligand>
        <name>NADP(+)</name>
        <dbReference type="ChEBI" id="CHEBI:58349"/>
    </ligand>
</feature>
<feature type="binding site" evidence="1">
    <location>
        <position position="91"/>
    </location>
    <ligand>
        <name>substrate</name>
    </ligand>
</feature>
<feature type="binding site" evidence="2">
    <location>
        <position position="130"/>
    </location>
    <ligand>
        <name>substrate</name>
    </ligand>
</feature>
<feature type="binding site" evidence="2">
    <location>
        <position position="221"/>
    </location>
    <ligand>
        <name>Mg(2+)</name>
        <dbReference type="ChEBI" id="CHEBI:18420"/>
    </ligand>
</feature>
<feature type="binding site" evidence="2">
    <location>
        <position position="246"/>
    </location>
    <ligand>
        <name>Mg(2+)</name>
        <dbReference type="ChEBI" id="CHEBI:18420"/>
    </ligand>
</feature>
<feature type="binding site" evidence="2">
    <location>
        <position position="250"/>
    </location>
    <ligand>
        <name>Mg(2+)</name>
        <dbReference type="ChEBI" id="CHEBI:18420"/>
    </ligand>
</feature>
<feature type="binding site" evidence="1">
    <location>
        <begin position="277"/>
        <end position="282"/>
    </location>
    <ligand>
        <name>NADP(+)</name>
        <dbReference type="ChEBI" id="CHEBI:58349"/>
    </ligand>
</feature>
<feature type="site" description="Critical for catalysis" evidence="2">
    <location>
        <position position="137"/>
    </location>
</feature>
<feature type="site" description="Critical for catalysis" evidence="2">
    <location>
        <position position="187"/>
    </location>
</feature>
<accession>K0E689</accession>
<organism>
    <name type="scientific">Aspergillus rugulosus</name>
    <name type="common">Emericella rugulosa</name>
    <dbReference type="NCBI Taxonomy" id="41736"/>
    <lineage>
        <taxon>Eukaryota</taxon>
        <taxon>Fungi</taxon>
        <taxon>Dikarya</taxon>
        <taxon>Ascomycota</taxon>
        <taxon>Pezizomycotina</taxon>
        <taxon>Eurotiomycetes</taxon>
        <taxon>Eurotiomycetidae</taxon>
        <taxon>Eurotiales</taxon>
        <taxon>Aspergillaceae</taxon>
        <taxon>Aspergillus</taxon>
        <taxon>Aspergillus subgen. Nidulantes</taxon>
    </lineage>
</organism>
<evidence type="ECO:0000250" key="1">
    <source>
        <dbReference type="UniProtKB" id="O75874"/>
    </source>
</evidence>
<evidence type="ECO:0000250" key="2">
    <source>
        <dbReference type="UniProtKB" id="P50213"/>
    </source>
</evidence>
<evidence type="ECO:0000255" key="3">
    <source>
        <dbReference type="RuleBase" id="RU004445"/>
    </source>
</evidence>
<evidence type="ECO:0000269" key="4">
    <source>
    </source>
</evidence>
<evidence type="ECO:0000303" key="5">
    <source>
    </source>
</evidence>
<evidence type="ECO:0000305" key="6"/>
<evidence type="ECO:0000305" key="7">
    <source>
    </source>
</evidence>
<sequence length="366" mass="38706">MVKTFDIVVFPGDYGGPEVLGEIQSQYEQEVTFNLKYHLLGGASFDAHGTPIADEALTDAKAASAVLLGAVGGPAWDKAPIPVESGLGRLRKALDAFGNLRPVKFIHPILTETSALKEQVCRGADLLIIRELTGGIYYGARQEHDGTLNAASDLDHYERAQVQRVARLAGTLAMSTQPPTPITSLDKANLLAACGRLWRGVVEETIRREFPDVELKHMLIDTAAMTLGCRPTKLNGIVLTSNMFGDIISDQASAIPGSLGLLPSASLCAIPGGESGGCVHGIYEPVHGSAPDIAGQGIINPTGMILSVAMMLRYSLDMPAAATAVETAVSRVIERGGRTRDVGGTTSTAEFGDQVVACLRENTEDK</sequence>